<sequence>MDNKRLYNGNLSNIPEVIDPGITIPIYEEDIRNDTRMNTNARSVRVSDKRGRSSSTSPQKIGSYRTRAGRFSDTLTNLLPSISAKLHHSKKSTPVVVVPPTSSTPDSLNSTTYAPRVSSDSFTVATPLSLQSTTTRTRTRNNTVSSQITASSSLTTDVGNATSANIWSANAESNTSSSPLFDYPLATSYFEPLTRFKSTDNYTLPQTAQLNSFLEKNGNPNIWSSAGNSNTDHLNTPIVNRQRSQSQSTTNRVYTDAPYYQQPAQNYQVQVPPRVPKSTSISPVILDDVDPASINWITANQKVPLVNQISALLPTNTISISNVFPLQPTQQHQQNAVNLTSTSLATLCSQYGKVLSARTLRGLNMALVEFSTVESAICALEALQGKELSKVGAPSTVSFARVLPMYEQPLNVNGFNNTPKQPLLQEQLNHGVLNYQLQQSLQQPELQQQPTSFNQPNLTYCNPTQNLSHLQLSSNENEPYPFPLPPPSLSDSKKDILHTISSFKLEYDHLELNHLLQNALKNKGVSDTNYFGPLPEHNSKVPKRKDTFDAPKLRELRKQFDSNSLSTIEMEQLAIVMLDQLPELSSDYLGNTVIQKLFENSSNIIRDIMLRKCNKYLTSMGVHKNGTWVCQKIIKMANTPRQINLVTSGVSDYCTPLFNDQFGNYVIQGILKFGFPWNSFIFESVLSHFWTIVQNRYGSRAVRACLEADSIITQCQLLTITSLIIVLSPYLATDTNGTLLITWLLDTCTLPNKNLILCDKLVNKNLVKLCCHKLGSLTVLKILNLRGGEEEALSKNKIIHAIFDGPISSDSILFQILDEGNYGPTFIYKVLTSRILDNSVRDEAITKIRQLILNSNINLQSRQLLEEVGLSSAGISPKQSSKNHRKQHPQGFHSPGRARGVSVSSVRSSNSRHNSVIQMNNAGPTPALNFNPAPMSEINSYFNNQQVVYSGNQNQNQNGNSNGLDELNSQFDSFRIANGTNLSLPIVNLPNVSNNNNNYNNSGYSSQMNPLSRSVSHNNNNNTNNYNNNDNDNNNNNNNNNNNNNNNNNNNNNSNNSNNNNNNDTSLYRYRSYGY</sequence>
<proteinExistence type="evidence at protein level"/>
<comment type="function">
    <text evidence="4">RNA-binding protein involved in post-transcriptional regulation. Negatively regulates expression of COX17 by binding to the 3'-UTR of COX17 mRNA. Promotes decay of COX17 mRNA by enhancing its rate of deadenylation and subsequent turnover. Predominantly binds to mRNAs encoding membrane-associated proteins with roles in transmembrane transport and vesicular trafficking.</text>
</comment>
<comment type="subcellular location">
    <subcellularLocation>
        <location evidence="5 7">Cytoplasm</location>
    </subcellularLocation>
    <text>Localizes to foci enriched near the periphery of the cell.</text>
</comment>
<comment type="miscellaneous">
    <text evidence="6">Present with 377 molecules/cell in log phase SD medium.</text>
</comment>
<gene>
    <name type="primary">PUF2</name>
    <name type="ordered locus">YPR042C</name>
    <name type="ORF">YP3085.06c</name>
    <name type="ORF">YP9499.01</name>
</gene>
<reference key="1">
    <citation type="journal article" date="1998" name="Yeast">
        <title>Functional analysis of three adjacent open reading frames from the right arm of yeast chromosome XVI.</title>
        <authorList>
            <person name="Waskiewicz-Staniorowska B."/>
            <person name="Skala J."/>
            <person name="Jasinski M."/>
            <person name="Grenson M."/>
            <person name="Goffeau A."/>
            <person name="Ulaszewski S."/>
        </authorList>
    </citation>
    <scope>NUCLEOTIDE SEQUENCE [GENOMIC DNA]</scope>
    <source>
        <strain>ATCC 46191 / IL125-2B</strain>
    </source>
</reference>
<reference key="2">
    <citation type="journal article" date="1997" name="Nature">
        <title>The nucleotide sequence of Saccharomyces cerevisiae chromosome XVI.</title>
        <authorList>
            <person name="Bussey H."/>
            <person name="Storms R.K."/>
            <person name="Ahmed A."/>
            <person name="Albermann K."/>
            <person name="Allen E."/>
            <person name="Ansorge W."/>
            <person name="Araujo R."/>
            <person name="Aparicio A."/>
            <person name="Barrell B.G."/>
            <person name="Badcock K."/>
            <person name="Benes V."/>
            <person name="Botstein D."/>
            <person name="Bowman S."/>
            <person name="Brueckner M."/>
            <person name="Carpenter J."/>
            <person name="Cherry J.M."/>
            <person name="Chung E."/>
            <person name="Churcher C.M."/>
            <person name="Coster F."/>
            <person name="Davis K."/>
            <person name="Davis R.W."/>
            <person name="Dietrich F.S."/>
            <person name="Delius H."/>
            <person name="DiPaolo T."/>
            <person name="Dubois E."/>
            <person name="Duesterhoeft A."/>
            <person name="Duncan M."/>
            <person name="Floeth M."/>
            <person name="Fortin N."/>
            <person name="Friesen J.D."/>
            <person name="Fritz C."/>
            <person name="Goffeau A."/>
            <person name="Hall J."/>
            <person name="Hebling U."/>
            <person name="Heumann K."/>
            <person name="Hilbert H."/>
            <person name="Hillier L.W."/>
            <person name="Hunicke-Smith S."/>
            <person name="Hyman R.W."/>
            <person name="Johnston M."/>
            <person name="Kalman S."/>
            <person name="Kleine K."/>
            <person name="Komp C."/>
            <person name="Kurdi O."/>
            <person name="Lashkari D."/>
            <person name="Lew H."/>
            <person name="Lin A."/>
            <person name="Lin D."/>
            <person name="Louis E.J."/>
            <person name="Marathe R."/>
            <person name="Messenguy F."/>
            <person name="Mewes H.-W."/>
            <person name="Mirtipati S."/>
            <person name="Moestl D."/>
            <person name="Mueller-Auer S."/>
            <person name="Namath A."/>
            <person name="Nentwich U."/>
            <person name="Oefner P."/>
            <person name="Pearson D."/>
            <person name="Petel F.X."/>
            <person name="Pohl T.M."/>
            <person name="Purnelle B."/>
            <person name="Rajandream M.A."/>
            <person name="Rechmann S."/>
            <person name="Rieger M."/>
            <person name="Riles L."/>
            <person name="Roberts D."/>
            <person name="Schaefer M."/>
            <person name="Scharfe M."/>
            <person name="Scherens B."/>
            <person name="Schramm S."/>
            <person name="Schroeder M."/>
            <person name="Sdicu A.-M."/>
            <person name="Tettelin H."/>
            <person name="Urrestarazu L.A."/>
            <person name="Ushinsky S."/>
            <person name="Vierendeels F."/>
            <person name="Vissers S."/>
            <person name="Voss H."/>
            <person name="Walsh S.V."/>
            <person name="Wambutt R."/>
            <person name="Wang Y."/>
            <person name="Wedler E."/>
            <person name="Wedler H."/>
            <person name="Winnett E."/>
            <person name="Zhong W.-W."/>
            <person name="Zollner A."/>
            <person name="Vo D.H."/>
            <person name="Hani J."/>
        </authorList>
    </citation>
    <scope>NUCLEOTIDE SEQUENCE [LARGE SCALE GENOMIC DNA]</scope>
    <source>
        <strain>ATCC 204508 / S288c</strain>
    </source>
</reference>
<reference key="3">
    <citation type="journal article" date="2014" name="G3 (Bethesda)">
        <title>The reference genome sequence of Saccharomyces cerevisiae: Then and now.</title>
        <authorList>
            <person name="Engel S.R."/>
            <person name="Dietrich F.S."/>
            <person name="Fisk D.G."/>
            <person name="Binkley G."/>
            <person name="Balakrishnan R."/>
            <person name="Costanzo M.C."/>
            <person name="Dwight S.S."/>
            <person name="Hitz B.C."/>
            <person name="Karra K."/>
            <person name="Nash R.S."/>
            <person name="Weng S."/>
            <person name="Wong E.D."/>
            <person name="Lloyd P."/>
            <person name="Skrzypek M.S."/>
            <person name="Miyasato S.R."/>
            <person name="Simison M."/>
            <person name="Cherry J.M."/>
        </authorList>
    </citation>
    <scope>GENOME REANNOTATION</scope>
    <source>
        <strain>ATCC 204508 / S288c</strain>
    </source>
</reference>
<reference key="4">
    <citation type="journal article" date="2000" name="EMBO J.">
        <title>The Puf3 protein is a transcript-specific regulator of mRNA degradation in yeast.</title>
        <authorList>
            <person name="Olivas W.M."/>
            <person name="Parker R."/>
        </authorList>
    </citation>
    <scope>FUNCTION</scope>
    <scope>RNA-BINDING</scope>
</reference>
<reference key="5">
    <citation type="journal article" date="2003" name="Nature">
        <title>Global analysis of protein localization in budding yeast.</title>
        <authorList>
            <person name="Huh W.-K."/>
            <person name="Falvo J.V."/>
            <person name="Gerke L.C."/>
            <person name="Carroll A.S."/>
            <person name="Howson R.W."/>
            <person name="Weissman J.S."/>
            <person name="O'Shea E.K."/>
        </authorList>
    </citation>
    <scope>SUBCELLULAR LOCATION [LARGE SCALE ANALYSIS]</scope>
</reference>
<reference key="6">
    <citation type="journal article" date="2003" name="Nature">
        <title>Global analysis of protein expression in yeast.</title>
        <authorList>
            <person name="Ghaemmaghami S."/>
            <person name="Huh W.-K."/>
            <person name="Bower K."/>
            <person name="Howson R.W."/>
            <person name="Belle A."/>
            <person name="Dephoure N."/>
            <person name="O'Shea E.K."/>
            <person name="Weissman J.S."/>
        </authorList>
    </citation>
    <scope>LEVEL OF PROTEIN EXPRESSION [LARGE SCALE ANALYSIS]</scope>
</reference>
<reference key="7">
    <citation type="journal article" date="2004" name="PLoS Biol.">
        <title>Extensive association of functionally and cytotopically related mRNAs with Puf family RNA-binding proteins in yeast.</title>
        <authorList>
            <person name="Gerber A.P."/>
            <person name="Herschlag D."/>
            <person name="Brown P.O."/>
        </authorList>
    </citation>
    <scope>RNA-BINDING</scope>
    <scope>SUBCELLULAR LOCATION</scope>
</reference>
<reference key="8">
    <citation type="journal article" date="2005" name="Mol. Cell. Proteomics">
        <title>Quantitative phosphoproteomics applied to the yeast pheromone signaling pathway.</title>
        <authorList>
            <person name="Gruhler A."/>
            <person name="Olsen J.V."/>
            <person name="Mohammed S."/>
            <person name="Mortensen P."/>
            <person name="Faergeman N.J."/>
            <person name="Mann M."/>
            <person name="Jensen O.N."/>
        </authorList>
    </citation>
    <scope>IDENTIFICATION BY MASS SPECTROMETRY [LARGE SCALE ANALYSIS]</scope>
    <source>
        <strain>YAL6B</strain>
    </source>
</reference>
<reference key="9">
    <citation type="journal article" date="2007" name="J. Proteome Res.">
        <title>Large-scale phosphorylation analysis of alpha-factor-arrested Saccharomyces cerevisiae.</title>
        <authorList>
            <person name="Li X."/>
            <person name="Gerber S.A."/>
            <person name="Rudner A.D."/>
            <person name="Beausoleil S.A."/>
            <person name="Haas W."/>
            <person name="Villen J."/>
            <person name="Elias J.E."/>
            <person name="Gygi S.P."/>
        </authorList>
    </citation>
    <scope>IDENTIFICATION BY MASS SPECTROMETRY [LARGE SCALE ANALYSIS]</scope>
    <source>
        <strain>ADR376</strain>
    </source>
</reference>
<reference key="10">
    <citation type="journal article" date="2008" name="Mol. Cell. Proteomics">
        <title>A multidimensional chromatography technology for in-depth phosphoproteome analysis.</title>
        <authorList>
            <person name="Albuquerque C.P."/>
            <person name="Smolka M.B."/>
            <person name="Payne S.H."/>
            <person name="Bafna V."/>
            <person name="Eng J."/>
            <person name="Zhou H."/>
        </authorList>
    </citation>
    <scope>IDENTIFICATION BY MASS SPECTROMETRY [LARGE SCALE ANALYSIS]</scope>
</reference>
<reference key="11">
    <citation type="journal article" date="2009" name="Science">
        <title>Global analysis of Cdk1 substrate phosphorylation sites provides insights into evolution.</title>
        <authorList>
            <person name="Holt L.J."/>
            <person name="Tuch B.B."/>
            <person name="Villen J."/>
            <person name="Johnson A.D."/>
            <person name="Gygi S.P."/>
            <person name="Morgan D.O."/>
        </authorList>
    </citation>
    <scope>PHOSPHORYLATION [LARGE SCALE ANALYSIS] AT SER-72; SER-198; SER-872 AND SER-876</scope>
    <scope>IDENTIFICATION BY MASS SPECTROMETRY [LARGE SCALE ANALYSIS]</scope>
</reference>
<accession>Q12221</accession>
<accession>D6W451</accession>
<accession>Q02573</accession>
<accession>Q04142</accession>
<accession>Q7LH42</accession>
<accession>Q7LH98</accession>
<evidence type="ECO:0000255" key="1">
    <source>
        <dbReference type="PROSITE-ProRule" id="PRU00176"/>
    </source>
</evidence>
<evidence type="ECO:0000255" key="2">
    <source>
        <dbReference type="PROSITE-ProRule" id="PRU00318"/>
    </source>
</evidence>
<evidence type="ECO:0000256" key="3">
    <source>
        <dbReference type="SAM" id="MobiDB-lite"/>
    </source>
</evidence>
<evidence type="ECO:0000269" key="4">
    <source>
    </source>
</evidence>
<evidence type="ECO:0000269" key="5">
    <source>
    </source>
</evidence>
<evidence type="ECO:0000269" key="6">
    <source>
    </source>
</evidence>
<evidence type="ECO:0000269" key="7">
    <source>
    </source>
</evidence>
<evidence type="ECO:0007744" key="8">
    <source>
    </source>
</evidence>
<feature type="chain" id="PRO_0000262754" description="mRNA-binding protein PUF2">
    <location>
        <begin position="1"/>
        <end position="1075"/>
    </location>
</feature>
<feature type="domain" description="RRM" evidence="1">
    <location>
        <begin position="316"/>
        <end position="402"/>
    </location>
</feature>
<feature type="domain" description="PUM-HD" evidence="2">
    <location>
        <begin position="511"/>
        <end position="872"/>
    </location>
</feature>
<feature type="repeat" description="Pumilio 1">
    <location>
        <begin position="574"/>
        <end position="611"/>
    </location>
</feature>
<feature type="repeat" description="Pumilio 2">
    <location>
        <begin position="612"/>
        <end position="647"/>
    </location>
</feature>
<feature type="repeat" description="Pumilio 3">
    <location>
        <begin position="649"/>
        <end position="683"/>
    </location>
</feature>
<feature type="repeat" description="Pumilio 4">
    <location>
        <begin position="684"/>
        <end position="719"/>
    </location>
</feature>
<feature type="repeat" description="Pumilio 5">
    <location>
        <begin position="722"/>
        <end position="758"/>
    </location>
</feature>
<feature type="repeat" description="Pumilio 6">
    <location>
        <begin position="760"/>
        <end position="800"/>
    </location>
</feature>
<feature type="region of interest" description="Disordered" evidence="3">
    <location>
        <begin position="38"/>
        <end position="68"/>
    </location>
</feature>
<feature type="region of interest" description="Disordered" evidence="3">
    <location>
        <begin position="93"/>
        <end position="112"/>
    </location>
</feature>
<feature type="region of interest" description="Disordered" evidence="3">
    <location>
        <begin position="874"/>
        <end position="931"/>
    </location>
</feature>
<feature type="region of interest" description="Disordered" evidence="3">
    <location>
        <begin position="997"/>
        <end position="1075"/>
    </location>
</feature>
<feature type="compositionally biased region" description="Low complexity" evidence="3">
    <location>
        <begin position="93"/>
        <end position="105"/>
    </location>
</feature>
<feature type="compositionally biased region" description="Low complexity" evidence="3">
    <location>
        <begin position="901"/>
        <end position="916"/>
    </location>
</feature>
<feature type="compositionally biased region" description="Low complexity" evidence="3">
    <location>
        <begin position="997"/>
        <end position="1009"/>
    </location>
</feature>
<feature type="compositionally biased region" description="Low complexity" evidence="3">
    <location>
        <begin position="1018"/>
        <end position="1063"/>
    </location>
</feature>
<feature type="modified residue" description="Phosphoserine" evidence="8">
    <location>
        <position position="72"/>
    </location>
</feature>
<feature type="modified residue" description="Phosphoserine" evidence="8">
    <location>
        <position position="198"/>
    </location>
</feature>
<feature type="modified residue" description="Phosphoserine" evidence="8">
    <location>
        <position position="872"/>
    </location>
</feature>
<feature type="modified residue" description="Phosphoserine" evidence="8">
    <location>
        <position position="876"/>
    </location>
</feature>
<name>PUF2_YEAST</name>
<keyword id="KW-0963">Cytoplasm</keyword>
<keyword id="KW-0597">Phosphoprotein</keyword>
<keyword id="KW-1185">Reference proteome</keyword>
<keyword id="KW-0677">Repeat</keyword>
<keyword id="KW-0694">RNA-binding</keyword>
<organism>
    <name type="scientific">Saccharomyces cerevisiae (strain ATCC 204508 / S288c)</name>
    <name type="common">Baker's yeast</name>
    <dbReference type="NCBI Taxonomy" id="559292"/>
    <lineage>
        <taxon>Eukaryota</taxon>
        <taxon>Fungi</taxon>
        <taxon>Dikarya</taxon>
        <taxon>Ascomycota</taxon>
        <taxon>Saccharomycotina</taxon>
        <taxon>Saccharomycetes</taxon>
        <taxon>Saccharomycetales</taxon>
        <taxon>Saccharomycetaceae</taxon>
        <taxon>Saccharomyces</taxon>
    </lineage>
</organism>
<dbReference type="EMBL" id="Z73616">
    <property type="protein sequence ID" value="CAA97992.1"/>
    <property type="molecule type" value="Genomic_DNA"/>
</dbReference>
<dbReference type="EMBL" id="Z71255">
    <property type="protein sequence ID" value="CAA94990.1"/>
    <property type="molecule type" value="Genomic_DNA"/>
</dbReference>
<dbReference type="EMBL" id="Z49219">
    <property type="protein sequence ID" value="CAA89163.1"/>
    <property type="molecule type" value="Genomic_DNA"/>
</dbReference>
<dbReference type="EMBL" id="Z68111">
    <property type="protein sequence ID" value="CAA92146.1"/>
    <property type="molecule type" value="Genomic_DNA"/>
</dbReference>
<dbReference type="EMBL" id="BK006949">
    <property type="protein sequence ID" value="DAA11467.1"/>
    <property type="molecule type" value="Genomic_DNA"/>
</dbReference>
<dbReference type="PIR" id="S54067">
    <property type="entry name" value="S54067"/>
</dbReference>
<dbReference type="RefSeq" id="NP_015367.1">
    <property type="nucleotide sequence ID" value="NM_001184139.1"/>
</dbReference>
<dbReference type="SMR" id="Q12221"/>
<dbReference type="BioGRID" id="36219">
    <property type="interactions" value="1296"/>
</dbReference>
<dbReference type="FunCoup" id="Q12221">
    <property type="interactions" value="66"/>
</dbReference>
<dbReference type="IntAct" id="Q12221">
    <property type="interactions" value="16"/>
</dbReference>
<dbReference type="MINT" id="Q12221"/>
<dbReference type="STRING" id="4932.YPR042C"/>
<dbReference type="GlyGen" id="Q12221">
    <property type="glycosylation" value="3 sites, 1 O-linked glycan (1 site)"/>
</dbReference>
<dbReference type="iPTMnet" id="Q12221"/>
<dbReference type="PaxDb" id="4932-YPR042C"/>
<dbReference type="PeptideAtlas" id="Q12221"/>
<dbReference type="EnsemblFungi" id="YPR042C_mRNA">
    <property type="protein sequence ID" value="YPR042C"/>
    <property type="gene ID" value="YPR042C"/>
</dbReference>
<dbReference type="GeneID" id="856155"/>
<dbReference type="KEGG" id="sce:YPR042C"/>
<dbReference type="AGR" id="SGD:S000006246"/>
<dbReference type="SGD" id="S000006246">
    <property type="gene designation" value="PUF2"/>
</dbReference>
<dbReference type="VEuPathDB" id="FungiDB:YPR042C"/>
<dbReference type="eggNOG" id="KOG4574">
    <property type="taxonomic scope" value="Eukaryota"/>
</dbReference>
<dbReference type="GeneTree" id="ENSGT00940000176457"/>
<dbReference type="HOGENOM" id="CLU_009728_0_0_1"/>
<dbReference type="InParanoid" id="Q12221"/>
<dbReference type="OMA" id="SINWITA"/>
<dbReference type="OrthoDB" id="2017782at2759"/>
<dbReference type="BioCyc" id="YEAST:G3O-34198-MONOMER"/>
<dbReference type="BioGRID-ORCS" id="856155">
    <property type="hits" value="1 hit in 10 CRISPR screens"/>
</dbReference>
<dbReference type="PRO" id="PR:Q12221"/>
<dbReference type="Proteomes" id="UP000002311">
    <property type="component" value="Chromosome XVI"/>
</dbReference>
<dbReference type="RNAct" id="Q12221">
    <property type="molecule type" value="protein"/>
</dbReference>
<dbReference type="GO" id="GO:0005737">
    <property type="term" value="C:cytoplasm"/>
    <property type="evidence" value="ECO:0007005"/>
    <property type="project" value="SGD"/>
</dbReference>
<dbReference type="GO" id="GO:0000932">
    <property type="term" value="C:P-body"/>
    <property type="evidence" value="ECO:0000318"/>
    <property type="project" value="GO_Central"/>
</dbReference>
<dbReference type="GO" id="GO:0035925">
    <property type="term" value="F:mRNA 3'-UTR AU-rich region binding"/>
    <property type="evidence" value="ECO:0000318"/>
    <property type="project" value="GO_Central"/>
</dbReference>
<dbReference type="GO" id="GO:0003729">
    <property type="term" value="F:mRNA binding"/>
    <property type="evidence" value="ECO:0000314"/>
    <property type="project" value="SGD"/>
</dbReference>
<dbReference type="GO" id="GO:0000288">
    <property type="term" value="P:nuclear-transcribed mRNA catabolic process, deadenylation-dependent decay"/>
    <property type="evidence" value="ECO:0000315"/>
    <property type="project" value="SGD"/>
</dbReference>
<dbReference type="CDD" id="cd21616">
    <property type="entry name" value="RRM_ScJSN1_like"/>
    <property type="match status" value="1"/>
</dbReference>
<dbReference type="FunFam" id="3.30.70.330:FF:000617">
    <property type="entry name" value="Puf family protein"/>
    <property type="match status" value="1"/>
</dbReference>
<dbReference type="FunFam" id="1.25.10.10:FF:000167">
    <property type="entry name" value="RNA binding protein Jsn1"/>
    <property type="match status" value="1"/>
</dbReference>
<dbReference type="Gene3D" id="3.30.70.330">
    <property type="match status" value="1"/>
</dbReference>
<dbReference type="Gene3D" id="1.25.10.10">
    <property type="entry name" value="Leucine-rich Repeat Variant"/>
    <property type="match status" value="1"/>
</dbReference>
<dbReference type="InterPro" id="IPR011989">
    <property type="entry name" value="ARM-like"/>
</dbReference>
<dbReference type="InterPro" id="IPR016024">
    <property type="entry name" value="ARM-type_fold"/>
</dbReference>
<dbReference type="InterPro" id="IPR012677">
    <property type="entry name" value="Nucleotide-bd_a/b_plait_sf"/>
</dbReference>
<dbReference type="InterPro" id="IPR033133">
    <property type="entry name" value="PUM-HD"/>
</dbReference>
<dbReference type="InterPro" id="IPR052645">
    <property type="entry name" value="Pumilio_domain_protein"/>
</dbReference>
<dbReference type="InterPro" id="IPR001313">
    <property type="entry name" value="Pumilio_RNA-bd_rpt"/>
</dbReference>
<dbReference type="InterPro" id="IPR035979">
    <property type="entry name" value="RBD_domain_sf"/>
</dbReference>
<dbReference type="InterPro" id="IPR000504">
    <property type="entry name" value="RRM_dom"/>
</dbReference>
<dbReference type="PANTHER" id="PTHR47093">
    <property type="entry name" value="PROTEIN JSN1-RELATED"/>
    <property type="match status" value="1"/>
</dbReference>
<dbReference type="PANTHER" id="PTHR47093:SF1">
    <property type="entry name" value="PROTEIN JSN1-RELATED"/>
    <property type="match status" value="1"/>
</dbReference>
<dbReference type="Pfam" id="PF00806">
    <property type="entry name" value="PUF"/>
    <property type="match status" value="3"/>
</dbReference>
<dbReference type="Pfam" id="PF00076">
    <property type="entry name" value="RRM_1"/>
    <property type="match status" value="1"/>
</dbReference>
<dbReference type="SMART" id="SM00025">
    <property type="entry name" value="Pumilio"/>
    <property type="match status" value="6"/>
</dbReference>
<dbReference type="SMART" id="SM00360">
    <property type="entry name" value="RRM"/>
    <property type="match status" value="1"/>
</dbReference>
<dbReference type="SUPFAM" id="SSF48371">
    <property type="entry name" value="ARM repeat"/>
    <property type="match status" value="1"/>
</dbReference>
<dbReference type="SUPFAM" id="SSF54928">
    <property type="entry name" value="RNA-binding domain, RBD"/>
    <property type="match status" value="1"/>
</dbReference>
<dbReference type="PROSITE" id="PS50302">
    <property type="entry name" value="PUM"/>
    <property type="match status" value="5"/>
</dbReference>
<dbReference type="PROSITE" id="PS50303">
    <property type="entry name" value="PUM_HD"/>
    <property type="match status" value="1"/>
</dbReference>
<dbReference type="PROSITE" id="PS50102">
    <property type="entry name" value="RRM"/>
    <property type="match status" value="1"/>
</dbReference>
<protein>
    <recommendedName>
        <fullName>mRNA-binding protein PUF2</fullName>
    </recommendedName>
    <alternativeName>
        <fullName>Pumilio homology domain family member 2</fullName>
    </alternativeName>
</protein>